<name>FK121_ARATH</name>
<feature type="chain" id="PRO_0000283276" description="F-box/kelch-repeat protein At5g48990">
    <location>
        <begin position="1"/>
        <end position="372"/>
    </location>
</feature>
<feature type="domain" description="F-box" evidence="1">
    <location>
        <begin position="14"/>
        <end position="60"/>
    </location>
</feature>
<feature type="repeat" description="Kelch">
    <location>
        <begin position="176"/>
        <end position="222"/>
    </location>
</feature>
<keyword id="KW-0880">Kelch repeat</keyword>
<keyword id="KW-1185">Reference proteome</keyword>
<gene>
    <name type="ordered locus">At5g48990</name>
    <name type="ORF">K19E20.12</name>
</gene>
<organism>
    <name type="scientific">Arabidopsis thaliana</name>
    <name type="common">Mouse-ear cress</name>
    <dbReference type="NCBI Taxonomy" id="3702"/>
    <lineage>
        <taxon>Eukaryota</taxon>
        <taxon>Viridiplantae</taxon>
        <taxon>Streptophyta</taxon>
        <taxon>Embryophyta</taxon>
        <taxon>Tracheophyta</taxon>
        <taxon>Spermatophyta</taxon>
        <taxon>Magnoliopsida</taxon>
        <taxon>eudicotyledons</taxon>
        <taxon>Gunneridae</taxon>
        <taxon>Pentapetalae</taxon>
        <taxon>rosids</taxon>
        <taxon>malvids</taxon>
        <taxon>Brassicales</taxon>
        <taxon>Brassicaceae</taxon>
        <taxon>Camelineae</taxon>
        <taxon>Arabidopsis</taxon>
    </lineage>
</organism>
<proteinExistence type="evidence at transcript level"/>
<accession>Q9FI71</accession>
<evidence type="ECO:0000255" key="1">
    <source>
        <dbReference type="PROSITE-ProRule" id="PRU00080"/>
    </source>
</evidence>
<sequence length="372" mass="42411">MSSPEKKRKKNQKSSPNPSLPEDLIVSILARVSRSYYTNLSVVSKTFRSILTSPELYKTRTLLGKPETFLYVCLRFPDEANPRWLILYRKPNQTLTKKKKKKEDSSVHLLAPIPILNSPTVEWSSLVAVGSYLYAITADIKDSPCSNVWYLDCRTHTWLDSPRLRLAHINSDFNGRTYFPGSSEKPDSLNCVEVYNTNTQTWNPVPPQKRKLKFGNMEGKIYIPPCQENHRKAVALNPKVLTWEAVGLGTNLDRGSFCMIGNIAYCYDPSGKFRWMNCNTAEGDWSRLEGLEGLPKFARYSTVKLAEYGGKLVVLWDKYVAASGYKEKMIWCAEISLEKRNSEEIWGKVEWFDAVLTVPKSYKFVCAKSATV</sequence>
<dbReference type="EMBL" id="AB017061">
    <property type="protein sequence ID" value="BAB10323.1"/>
    <property type="molecule type" value="Genomic_DNA"/>
</dbReference>
<dbReference type="EMBL" id="CP002688">
    <property type="protein sequence ID" value="AED95753.1"/>
    <property type="molecule type" value="Genomic_DNA"/>
</dbReference>
<dbReference type="EMBL" id="AY072073">
    <property type="protein sequence ID" value="AAL59896.1"/>
    <property type="molecule type" value="mRNA"/>
</dbReference>
<dbReference type="EMBL" id="AY122957">
    <property type="protein sequence ID" value="AAM67490.1"/>
    <property type="molecule type" value="mRNA"/>
</dbReference>
<dbReference type="RefSeq" id="NP_199710.1">
    <property type="nucleotide sequence ID" value="NM_124276.4"/>
</dbReference>
<dbReference type="SMR" id="Q9FI71"/>
<dbReference type="BioGRID" id="20204">
    <property type="interactions" value="2"/>
</dbReference>
<dbReference type="FunCoup" id="Q9FI71">
    <property type="interactions" value="11"/>
</dbReference>
<dbReference type="IntAct" id="Q9FI71">
    <property type="interactions" value="1"/>
</dbReference>
<dbReference type="STRING" id="3702.Q9FI71"/>
<dbReference type="PaxDb" id="3702-AT5G48990.1"/>
<dbReference type="EnsemblPlants" id="AT5G48990.1">
    <property type="protein sequence ID" value="AT5G48990.1"/>
    <property type="gene ID" value="AT5G48990"/>
</dbReference>
<dbReference type="GeneID" id="834958"/>
<dbReference type="Gramene" id="AT5G48990.1">
    <property type="protein sequence ID" value="AT5G48990.1"/>
    <property type="gene ID" value="AT5G48990"/>
</dbReference>
<dbReference type="KEGG" id="ath:AT5G48990"/>
<dbReference type="Araport" id="AT5G48990"/>
<dbReference type="TAIR" id="AT5G48990"/>
<dbReference type="eggNOG" id="KOG1072">
    <property type="taxonomic scope" value="Eukaryota"/>
</dbReference>
<dbReference type="HOGENOM" id="CLU_032521_1_2_1"/>
<dbReference type="InParanoid" id="Q9FI71"/>
<dbReference type="OMA" id="EDKRIFR"/>
<dbReference type="PhylomeDB" id="Q9FI71"/>
<dbReference type="PRO" id="PR:Q9FI71"/>
<dbReference type="Proteomes" id="UP000006548">
    <property type="component" value="Chromosome 5"/>
</dbReference>
<dbReference type="ExpressionAtlas" id="Q9FI71">
    <property type="expression patterns" value="baseline and differential"/>
</dbReference>
<dbReference type="GO" id="GO:0006511">
    <property type="term" value="P:ubiquitin-dependent protein catabolic process"/>
    <property type="evidence" value="ECO:0000314"/>
    <property type="project" value="TAIR"/>
</dbReference>
<dbReference type="CDD" id="cd22152">
    <property type="entry name" value="F-box_AtAFR-like"/>
    <property type="match status" value="1"/>
</dbReference>
<dbReference type="FunFam" id="2.120.10.80:FF:000210">
    <property type="entry name" value="F-box/kelch-repeat protein At4g19330"/>
    <property type="match status" value="1"/>
</dbReference>
<dbReference type="Gene3D" id="2.120.10.80">
    <property type="entry name" value="Kelch-type beta propeller"/>
    <property type="match status" value="1"/>
</dbReference>
<dbReference type="InterPro" id="IPR036047">
    <property type="entry name" value="F-box-like_dom_sf"/>
</dbReference>
<dbReference type="InterPro" id="IPR050354">
    <property type="entry name" value="F-box/kelch-repeat_ARATH"/>
</dbReference>
<dbReference type="InterPro" id="IPR001810">
    <property type="entry name" value="F-box_dom"/>
</dbReference>
<dbReference type="InterPro" id="IPR015915">
    <property type="entry name" value="Kelch-typ_b-propeller"/>
</dbReference>
<dbReference type="PANTHER" id="PTHR24414">
    <property type="entry name" value="F-BOX/KELCH-REPEAT PROTEIN SKIP4"/>
    <property type="match status" value="1"/>
</dbReference>
<dbReference type="PANTHER" id="PTHR24414:SF184">
    <property type="entry name" value="GALACTOSE OXIDASE_KELCH REPEAT SUPERFAMILY PROTEIN"/>
    <property type="match status" value="1"/>
</dbReference>
<dbReference type="Pfam" id="PF00646">
    <property type="entry name" value="F-box"/>
    <property type="match status" value="1"/>
</dbReference>
<dbReference type="Pfam" id="PF25210">
    <property type="entry name" value="Kelch_FKB95"/>
    <property type="match status" value="1"/>
</dbReference>
<dbReference type="SMART" id="SM00256">
    <property type="entry name" value="FBOX"/>
    <property type="match status" value="1"/>
</dbReference>
<dbReference type="SUPFAM" id="SSF81383">
    <property type="entry name" value="F-box domain"/>
    <property type="match status" value="1"/>
</dbReference>
<dbReference type="SUPFAM" id="SSF117281">
    <property type="entry name" value="Kelch motif"/>
    <property type="match status" value="1"/>
</dbReference>
<dbReference type="PROSITE" id="PS50181">
    <property type="entry name" value="FBOX"/>
    <property type="match status" value="1"/>
</dbReference>
<protein>
    <recommendedName>
        <fullName>F-box/kelch-repeat protein At5g48990</fullName>
    </recommendedName>
</protein>
<reference key="1">
    <citation type="journal article" date="1999" name="DNA Res.">
        <title>Structural analysis of Arabidopsis thaliana chromosome 5. IX. Sequence features of the regions of 1,011,550 bp covered by seventeen P1 and TAC clones.</title>
        <authorList>
            <person name="Kaneko T."/>
            <person name="Katoh T."/>
            <person name="Sato S."/>
            <person name="Nakamura Y."/>
            <person name="Asamizu E."/>
            <person name="Kotani H."/>
            <person name="Miyajima N."/>
            <person name="Tabata S."/>
        </authorList>
    </citation>
    <scope>NUCLEOTIDE SEQUENCE [LARGE SCALE GENOMIC DNA]</scope>
    <source>
        <strain>cv. Columbia</strain>
    </source>
</reference>
<reference key="2">
    <citation type="journal article" date="2017" name="Plant J.">
        <title>Araport11: a complete reannotation of the Arabidopsis thaliana reference genome.</title>
        <authorList>
            <person name="Cheng C.Y."/>
            <person name="Krishnakumar V."/>
            <person name="Chan A.P."/>
            <person name="Thibaud-Nissen F."/>
            <person name="Schobel S."/>
            <person name="Town C.D."/>
        </authorList>
    </citation>
    <scope>GENOME REANNOTATION</scope>
    <source>
        <strain>cv. Columbia</strain>
    </source>
</reference>
<reference key="3">
    <citation type="journal article" date="2003" name="Science">
        <title>Empirical analysis of transcriptional activity in the Arabidopsis genome.</title>
        <authorList>
            <person name="Yamada K."/>
            <person name="Lim J."/>
            <person name="Dale J.M."/>
            <person name="Chen H."/>
            <person name="Shinn P."/>
            <person name="Palm C.J."/>
            <person name="Southwick A.M."/>
            <person name="Wu H.C."/>
            <person name="Kim C.J."/>
            <person name="Nguyen M."/>
            <person name="Pham P.K."/>
            <person name="Cheuk R.F."/>
            <person name="Karlin-Newmann G."/>
            <person name="Liu S.X."/>
            <person name="Lam B."/>
            <person name="Sakano H."/>
            <person name="Wu T."/>
            <person name="Yu G."/>
            <person name="Miranda M."/>
            <person name="Quach H.L."/>
            <person name="Tripp M."/>
            <person name="Chang C.H."/>
            <person name="Lee J.M."/>
            <person name="Toriumi M.J."/>
            <person name="Chan M.M."/>
            <person name="Tang C.C."/>
            <person name="Onodera C.S."/>
            <person name="Deng J.M."/>
            <person name="Akiyama K."/>
            <person name="Ansari Y."/>
            <person name="Arakawa T."/>
            <person name="Banh J."/>
            <person name="Banno F."/>
            <person name="Bowser L."/>
            <person name="Brooks S.Y."/>
            <person name="Carninci P."/>
            <person name="Chao Q."/>
            <person name="Choy N."/>
            <person name="Enju A."/>
            <person name="Goldsmith A.D."/>
            <person name="Gurjal M."/>
            <person name="Hansen N.F."/>
            <person name="Hayashizaki Y."/>
            <person name="Johnson-Hopson C."/>
            <person name="Hsuan V.W."/>
            <person name="Iida K."/>
            <person name="Karnes M."/>
            <person name="Khan S."/>
            <person name="Koesema E."/>
            <person name="Ishida J."/>
            <person name="Jiang P.X."/>
            <person name="Jones T."/>
            <person name="Kawai J."/>
            <person name="Kamiya A."/>
            <person name="Meyers C."/>
            <person name="Nakajima M."/>
            <person name="Narusaka M."/>
            <person name="Seki M."/>
            <person name="Sakurai T."/>
            <person name="Satou M."/>
            <person name="Tamse R."/>
            <person name="Vaysberg M."/>
            <person name="Wallender E.K."/>
            <person name="Wong C."/>
            <person name="Yamamura Y."/>
            <person name="Yuan S."/>
            <person name="Shinozaki K."/>
            <person name="Davis R.W."/>
            <person name="Theologis A."/>
            <person name="Ecker J.R."/>
        </authorList>
    </citation>
    <scope>NUCLEOTIDE SEQUENCE [LARGE SCALE MRNA]</scope>
    <source>
        <strain>cv. Columbia</strain>
    </source>
</reference>